<dbReference type="EC" id="3.6.1.-" evidence="1"/>
<dbReference type="EMBL" id="AP008229">
    <property type="protein sequence ID" value="BAE67555.1"/>
    <property type="molecule type" value="Genomic_DNA"/>
</dbReference>
<dbReference type="SMR" id="Q2P7C2"/>
<dbReference type="KEGG" id="xom:XOO0800"/>
<dbReference type="HOGENOM" id="CLU_040416_1_0_6"/>
<dbReference type="GO" id="GO:0005737">
    <property type="term" value="C:cytoplasm"/>
    <property type="evidence" value="ECO:0007669"/>
    <property type="project" value="UniProtKB-SubCell"/>
</dbReference>
<dbReference type="GO" id="GO:0047429">
    <property type="term" value="F:nucleoside triphosphate diphosphatase activity"/>
    <property type="evidence" value="ECO:0007669"/>
    <property type="project" value="InterPro"/>
</dbReference>
<dbReference type="GO" id="GO:0009117">
    <property type="term" value="P:nucleotide metabolic process"/>
    <property type="evidence" value="ECO:0007669"/>
    <property type="project" value="UniProtKB-KW"/>
</dbReference>
<dbReference type="CDD" id="cd00555">
    <property type="entry name" value="Maf"/>
    <property type="match status" value="1"/>
</dbReference>
<dbReference type="FunFam" id="3.90.950.10:FF:000005">
    <property type="entry name" value="7-methyl-GTP pyrophosphatase"/>
    <property type="match status" value="1"/>
</dbReference>
<dbReference type="Gene3D" id="3.90.950.10">
    <property type="match status" value="1"/>
</dbReference>
<dbReference type="HAMAP" id="MF_00528">
    <property type="entry name" value="Maf"/>
    <property type="match status" value="1"/>
</dbReference>
<dbReference type="InterPro" id="IPR029001">
    <property type="entry name" value="ITPase-like_fam"/>
</dbReference>
<dbReference type="InterPro" id="IPR003697">
    <property type="entry name" value="Maf-like"/>
</dbReference>
<dbReference type="NCBIfam" id="TIGR00172">
    <property type="entry name" value="maf"/>
    <property type="match status" value="1"/>
</dbReference>
<dbReference type="PANTHER" id="PTHR43213:SF10">
    <property type="entry name" value="7-METHYL-GTP PYROPHOSPHATASE"/>
    <property type="match status" value="1"/>
</dbReference>
<dbReference type="PANTHER" id="PTHR43213">
    <property type="entry name" value="BIFUNCTIONAL DTTP/UTP PYROPHOSPHATASE/METHYLTRANSFERASE PROTEIN-RELATED"/>
    <property type="match status" value="1"/>
</dbReference>
<dbReference type="Pfam" id="PF02545">
    <property type="entry name" value="Maf"/>
    <property type="match status" value="1"/>
</dbReference>
<dbReference type="PIRSF" id="PIRSF006305">
    <property type="entry name" value="Maf"/>
    <property type="match status" value="1"/>
</dbReference>
<dbReference type="SUPFAM" id="SSF52972">
    <property type="entry name" value="ITPase-like"/>
    <property type="match status" value="1"/>
</dbReference>
<evidence type="ECO:0000255" key="1">
    <source>
        <dbReference type="HAMAP-Rule" id="MF_00528"/>
    </source>
</evidence>
<sequence length="190" mass="20286">MPRLILASTSAYRRQLLSRLQLEFDTGRPEVDEQPQSGEAPSALASRLAAEKAAAVAVRLPGAWVIGSDQVADLDGQALGKPGTRAQAQAQLTAMSGRTVRFHTAVSLIGPERELHALDLTEVQLRALTPAEIERYLDAEPALDCAGSFKCEGLGISLFDAIRSQDPTALVGLPLIALARLLREAGFHLP</sequence>
<organism>
    <name type="scientific">Xanthomonas oryzae pv. oryzae (strain MAFF 311018)</name>
    <dbReference type="NCBI Taxonomy" id="342109"/>
    <lineage>
        <taxon>Bacteria</taxon>
        <taxon>Pseudomonadati</taxon>
        <taxon>Pseudomonadota</taxon>
        <taxon>Gammaproteobacteria</taxon>
        <taxon>Lysobacterales</taxon>
        <taxon>Lysobacteraceae</taxon>
        <taxon>Xanthomonas</taxon>
    </lineage>
</organism>
<protein>
    <recommendedName>
        <fullName evidence="1">7-methyl-GTP pyrophosphatase</fullName>
        <shortName evidence="1">m(7)GTP pyrophosphatase</shortName>
        <ecNumber evidence="1">3.6.1.-</ecNumber>
    </recommendedName>
</protein>
<reference key="1">
    <citation type="journal article" date="2005" name="Jpn. Agric. Res. Q.">
        <title>Genome sequence of Xanthomonas oryzae pv. oryzae suggests contribution of large numbers of effector genes and insertion sequences to its race diversity.</title>
        <authorList>
            <person name="Ochiai H."/>
            <person name="Inoue Y."/>
            <person name="Takeya M."/>
            <person name="Sasaki A."/>
            <person name="Kaku H."/>
        </authorList>
    </citation>
    <scope>NUCLEOTIDE SEQUENCE [LARGE SCALE GENOMIC DNA]</scope>
    <source>
        <strain>MAFF 311018</strain>
    </source>
</reference>
<name>NTPPB_XANOM</name>
<gene>
    <name type="ordered locus">XOO0800</name>
</gene>
<feature type="chain" id="PRO_0000267470" description="7-methyl-GTP pyrophosphatase">
    <location>
        <begin position="1"/>
        <end position="190"/>
    </location>
</feature>
<feature type="active site" description="Proton acceptor" evidence="1">
    <location>
        <position position="69"/>
    </location>
</feature>
<feature type="site" description="Important for substrate specificity" evidence="1">
    <location>
        <position position="12"/>
    </location>
</feature>
<feature type="site" description="Important for substrate specificity" evidence="1">
    <location>
        <position position="70"/>
    </location>
</feature>
<feature type="site" description="Important for substrate specificity" evidence="1">
    <location>
        <position position="152"/>
    </location>
</feature>
<proteinExistence type="inferred from homology"/>
<accession>Q2P7C2</accession>
<keyword id="KW-0963">Cytoplasm</keyword>
<keyword id="KW-0378">Hydrolase</keyword>
<keyword id="KW-0546">Nucleotide metabolism</keyword>
<comment type="function">
    <text evidence="1">Nucleoside triphosphate pyrophosphatase that hydrolyzes 7-methyl-GTP (m(7)GTP). May have a dual role in cell division arrest and in preventing the incorporation of modified nucleotides into cellular nucleic acids.</text>
</comment>
<comment type="catalytic activity">
    <reaction evidence="1">
        <text>N(7)-methyl-GTP + H2O = N(7)-methyl-GMP + diphosphate + H(+)</text>
        <dbReference type="Rhea" id="RHEA:58744"/>
        <dbReference type="ChEBI" id="CHEBI:15377"/>
        <dbReference type="ChEBI" id="CHEBI:15378"/>
        <dbReference type="ChEBI" id="CHEBI:33019"/>
        <dbReference type="ChEBI" id="CHEBI:58285"/>
        <dbReference type="ChEBI" id="CHEBI:87133"/>
    </reaction>
</comment>
<comment type="cofactor">
    <cofactor evidence="1">
        <name>a divalent metal cation</name>
        <dbReference type="ChEBI" id="CHEBI:60240"/>
    </cofactor>
</comment>
<comment type="subcellular location">
    <subcellularLocation>
        <location evidence="1">Cytoplasm</location>
    </subcellularLocation>
</comment>
<comment type="similarity">
    <text evidence="1">Belongs to the Maf family. YceF subfamily.</text>
</comment>